<gene>
    <name evidence="1" type="primary">spx</name>
    <name type="ordered locus">SAR0965</name>
</gene>
<protein>
    <recommendedName>
        <fullName evidence="1">Global transcriptional regulator Spx</fullName>
    </recommendedName>
</protein>
<proteinExistence type="inferred from homology"/>
<accession>Q6GI88</accession>
<reference key="1">
    <citation type="journal article" date="2004" name="Proc. Natl. Acad. Sci. U.S.A.">
        <title>Complete genomes of two clinical Staphylococcus aureus strains: evidence for the rapid evolution of virulence and drug resistance.</title>
        <authorList>
            <person name="Holden M.T.G."/>
            <person name="Feil E.J."/>
            <person name="Lindsay J.A."/>
            <person name="Peacock S.J."/>
            <person name="Day N.P.J."/>
            <person name="Enright M.C."/>
            <person name="Foster T.J."/>
            <person name="Moore C.E."/>
            <person name="Hurst L."/>
            <person name="Atkin R."/>
            <person name="Barron A."/>
            <person name="Bason N."/>
            <person name="Bentley S.D."/>
            <person name="Chillingworth C."/>
            <person name="Chillingworth T."/>
            <person name="Churcher C."/>
            <person name="Clark L."/>
            <person name="Corton C."/>
            <person name="Cronin A."/>
            <person name="Doggett J."/>
            <person name="Dowd L."/>
            <person name="Feltwell T."/>
            <person name="Hance Z."/>
            <person name="Harris B."/>
            <person name="Hauser H."/>
            <person name="Holroyd S."/>
            <person name="Jagels K."/>
            <person name="James K.D."/>
            <person name="Lennard N."/>
            <person name="Line A."/>
            <person name="Mayes R."/>
            <person name="Moule S."/>
            <person name="Mungall K."/>
            <person name="Ormond D."/>
            <person name="Quail M.A."/>
            <person name="Rabbinowitsch E."/>
            <person name="Rutherford K.M."/>
            <person name="Sanders M."/>
            <person name="Sharp S."/>
            <person name="Simmonds M."/>
            <person name="Stevens K."/>
            <person name="Whitehead S."/>
            <person name="Barrell B.G."/>
            <person name="Spratt B.G."/>
            <person name="Parkhill J."/>
        </authorList>
    </citation>
    <scope>NUCLEOTIDE SEQUENCE [LARGE SCALE GENOMIC DNA]</scope>
    <source>
        <strain>MRSA252</strain>
    </source>
</reference>
<name>SPX_STAAR</name>
<organism>
    <name type="scientific">Staphylococcus aureus (strain MRSA252)</name>
    <dbReference type="NCBI Taxonomy" id="282458"/>
    <lineage>
        <taxon>Bacteria</taxon>
        <taxon>Bacillati</taxon>
        <taxon>Bacillota</taxon>
        <taxon>Bacilli</taxon>
        <taxon>Bacillales</taxon>
        <taxon>Staphylococcaceae</taxon>
        <taxon>Staphylococcus</taxon>
    </lineage>
</organism>
<keyword id="KW-0963">Cytoplasm</keyword>
<keyword id="KW-1015">Disulfide bond</keyword>
<keyword id="KW-0676">Redox-active center</keyword>
<keyword id="KW-0804">Transcription</keyword>
<keyword id="KW-0805">Transcription regulation</keyword>
<evidence type="ECO:0000255" key="1">
    <source>
        <dbReference type="HAMAP-Rule" id="MF_01132"/>
    </source>
</evidence>
<feature type="chain" id="PRO_0000162565" description="Global transcriptional regulator Spx">
    <location>
        <begin position="1"/>
        <end position="131"/>
    </location>
</feature>
<feature type="disulfide bond" description="Redox-active" evidence="1">
    <location>
        <begin position="10"/>
        <end position="13"/>
    </location>
</feature>
<dbReference type="EMBL" id="BX571856">
    <property type="protein sequence ID" value="CAG39970.1"/>
    <property type="molecule type" value="Genomic_DNA"/>
</dbReference>
<dbReference type="SMR" id="Q6GI88"/>
<dbReference type="KEGG" id="sar:SAR0965"/>
<dbReference type="HOGENOM" id="CLU_116644_1_1_9"/>
<dbReference type="Proteomes" id="UP000000596">
    <property type="component" value="Chromosome"/>
</dbReference>
<dbReference type="GO" id="GO:0005737">
    <property type="term" value="C:cytoplasm"/>
    <property type="evidence" value="ECO:0007669"/>
    <property type="project" value="UniProtKB-SubCell"/>
</dbReference>
<dbReference type="GO" id="GO:0045892">
    <property type="term" value="P:negative regulation of DNA-templated transcription"/>
    <property type="evidence" value="ECO:0007669"/>
    <property type="project" value="InterPro"/>
</dbReference>
<dbReference type="CDD" id="cd03032">
    <property type="entry name" value="ArsC_Spx"/>
    <property type="match status" value="1"/>
</dbReference>
<dbReference type="Gene3D" id="3.40.30.10">
    <property type="entry name" value="Glutaredoxin"/>
    <property type="match status" value="1"/>
</dbReference>
<dbReference type="HAMAP" id="MF_01132">
    <property type="entry name" value="Spx"/>
    <property type="match status" value="1"/>
</dbReference>
<dbReference type="InterPro" id="IPR006660">
    <property type="entry name" value="Arsenate_reductase-like"/>
</dbReference>
<dbReference type="InterPro" id="IPR023731">
    <property type="entry name" value="Spx"/>
</dbReference>
<dbReference type="InterPro" id="IPR036249">
    <property type="entry name" value="Thioredoxin-like_sf"/>
</dbReference>
<dbReference type="InterPro" id="IPR006504">
    <property type="entry name" value="Tscrpt_reg_Spx/MgsR"/>
</dbReference>
<dbReference type="NCBIfam" id="TIGR01617">
    <property type="entry name" value="arsC_related"/>
    <property type="match status" value="1"/>
</dbReference>
<dbReference type="NCBIfam" id="NF002459">
    <property type="entry name" value="PRK01655.1"/>
    <property type="match status" value="1"/>
</dbReference>
<dbReference type="NCBIfam" id="NF009210">
    <property type="entry name" value="PRK12559.1"/>
    <property type="match status" value="1"/>
</dbReference>
<dbReference type="PANTHER" id="PTHR30041">
    <property type="entry name" value="ARSENATE REDUCTASE"/>
    <property type="match status" value="1"/>
</dbReference>
<dbReference type="PANTHER" id="PTHR30041:SF7">
    <property type="entry name" value="GLOBAL TRANSCRIPTIONAL REGULATOR SPX"/>
    <property type="match status" value="1"/>
</dbReference>
<dbReference type="Pfam" id="PF03960">
    <property type="entry name" value="ArsC"/>
    <property type="match status" value="1"/>
</dbReference>
<dbReference type="SUPFAM" id="SSF52833">
    <property type="entry name" value="Thioredoxin-like"/>
    <property type="match status" value="1"/>
</dbReference>
<dbReference type="PROSITE" id="PS51353">
    <property type="entry name" value="ARSC"/>
    <property type="match status" value="1"/>
</dbReference>
<comment type="function">
    <text evidence="1">Global transcriptional regulator that plays a key role in stress response and exerts either positive or negative regulation of genes. Acts by interacting with the C-terminal domain of the alpha subunit of the RNA polymerase (RNAP). This interaction can enhance binding of RNAP to the promoter region of target genes and stimulate their transcription, or block interaction of RNAP with activator.</text>
</comment>
<comment type="subunit">
    <text evidence="1">Interacts with the C-terminal domain of the alpha subunit of the RNAP.</text>
</comment>
<comment type="subcellular location">
    <subcellularLocation>
        <location evidence="1">Cytoplasm</location>
    </subcellularLocation>
</comment>
<comment type="similarity">
    <text evidence="1">Belongs to the ArsC family. Spx subfamily.</text>
</comment>
<sequence>MVTLFTSPSCTSCRKAKAWLQEHDIPYTERNIFSEHLTIDEIKQILKMTEDGTDEIISTRSKTYQKLNVDIDSLPLQDLYSIIQDNPGLLRRPIILDNKRLQVGYNEDEIRRFLPRKVRTFQLQEAQRMVD</sequence>